<proteinExistence type="inferred from homology"/>
<evidence type="ECO:0000255" key="1">
    <source>
        <dbReference type="HAMAP-Rule" id="MF_00016"/>
    </source>
</evidence>
<organism>
    <name type="scientific">Aromatoleum aromaticum (strain DSM 19018 / LMG 30748 / EbN1)</name>
    <name type="common">Azoarcus sp. (strain EbN1)</name>
    <dbReference type="NCBI Taxonomy" id="76114"/>
    <lineage>
        <taxon>Bacteria</taxon>
        <taxon>Pseudomonadati</taxon>
        <taxon>Pseudomonadota</taxon>
        <taxon>Betaproteobacteria</taxon>
        <taxon>Rhodocyclales</taxon>
        <taxon>Rhodocyclaceae</taxon>
        <taxon>Aromatoleum</taxon>
    </lineage>
</organism>
<keyword id="KW-0067">ATP-binding</keyword>
<keyword id="KW-0963">Cytoplasm</keyword>
<keyword id="KW-0227">DNA damage</keyword>
<keyword id="KW-0233">DNA recombination</keyword>
<keyword id="KW-0234">DNA repair</keyword>
<keyword id="KW-0238">DNA-binding</keyword>
<keyword id="KW-0378">Hydrolase</keyword>
<keyword id="KW-0547">Nucleotide-binding</keyword>
<keyword id="KW-1185">Reference proteome</keyword>
<dbReference type="EC" id="3.6.4.-" evidence="1"/>
<dbReference type="EMBL" id="CR555306">
    <property type="protein sequence ID" value="CAI08367.1"/>
    <property type="molecule type" value="Genomic_DNA"/>
</dbReference>
<dbReference type="RefSeq" id="WP_011238055.1">
    <property type="nucleotide sequence ID" value="NC_006513.1"/>
</dbReference>
<dbReference type="SMR" id="Q5P2U7"/>
<dbReference type="STRING" id="76114.ebA3958"/>
<dbReference type="KEGG" id="eba:ebA3958"/>
<dbReference type="eggNOG" id="COG2255">
    <property type="taxonomic scope" value="Bacteria"/>
</dbReference>
<dbReference type="HOGENOM" id="CLU_055599_1_0_4"/>
<dbReference type="OrthoDB" id="9804478at2"/>
<dbReference type="Proteomes" id="UP000006552">
    <property type="component" value="Chromosome"/>
</dbReference>
<dbReference type="GO" id="GO:0005737">
    <property type="term" value="C:cytoplasm"/>
    <property type="evidence" value="ECO:0007669"/>
    <property type="project" value="UniProtKB-SubCell"/>
</dbReference>
<dbReference type="GO" id="GO:0048476">
    <property type="term" value="C:Holliday junction resolvase complex"/>
    <property type="evidence" value="ECO:0007669"/>
    <property type="project" value="UniProtKB-UniRule"/>
</dbReference>
<dbReference type="GO" id="GO:0005524">
    <property type="term" value="F:ATP binding"/>
    <property type="evidence" value="ECO:0007669"/>
    <property type="project" value="UniProtKB-UniRule"/>
</dbReference>
<dbReference type="GO" id="GO:0016887">
    <property type="term" value="F:ATP hydrolysis activity"/>
    <property type="evidence" value="ECO:0007669"/>
    <property type="project" value="InterPro"/>
</dbReference>
<dbReference type="GO" id="GO:0000400">
    <property type="term" value="F:four-way junction DNA binding"/>
    <property type="evidence" value="ECO:0007669"/>
    <property type="project" value="UniProtKB-UniRule"/>
</dbReference>
<dbReference type="GO" id="GO:0009378">
    <property type="term" value="F:four-way junction helicase activity"/>
    <property type="evidence" value="ECO:0007669"/>
    <property type="project" value="InterPro"/>
</dbReference>
<dbReference type="GO" id="GO:0006310">
    <property type="term" value="P:DNA recombination"/>
    <property type="evidence" value="ECO:0007669"/>
    <property type="project" value="UniProtKB-UniRule"/>
</dbReference>
<dbReference type="GO" id="GO:0006281">
    <property type="term" value="P:DNA repair"/>
    <property type="evidence" value="ECO:0007669"/>
    <property type="project" value="UniProtKB-UniRule"/>
</dbReference>
<dbReference type="CDD" id="cd00009">
    <property type="entry name" value="AAA"/>
    <property type="match status" value="1"/>
</dbReference>
<dbReference type="FunFam" id="1.10.10.10:FF:000086">
    <property type="entry name" value="Holliday junction ATP-dependent DNA helicase RuvB"/>
    <property type="match status" value="1"/>
</dbReference>
<dbReference type="FunFam" id="1.10.8.60:FF:000023">
    <property type="entry name" value="Holliday junction ATP-dependent DNA helicase RuvB"/>
    <property type="match status" value="1"/>
</dbReference>
<dbReference type="FunFam" id="3.40.50.300:FF:000073">
    <property type="entry name" value="Holliday junction ATP-dependent DNA helicase RuvB"/>
    <property type="match status" value="1"/>
</dbReference>
<dbReference type="Gene3D" id="1.10.8.60">
    <property type="match status" value="1"/>
</dbReference>
<dbReference type="Gene3D" id="3.40.50.300">
    <property type="entry name" value="P-loop containing nucleotide triphosphate hydrolases"/>
    <property type="match status" value="1"/>
</dbReference>
<dbReference type="Gene3D" id="1.10.10.10">
    <property type="entry name" value="Winged helix-like DNA-binding domain superfamily/Winged helix DNA-binding domain"/>
    <property type="match status" value="1"/>
</dbReference>
<dbReference type="HAMAP" id="MF_00016">
    <property type="entry name" value="DNA_HJ_migration_RuvB"/>
    <property type="match status" value="1"/>
</dbReference>
<dbReference type="InterPro" id="IPR003593">
    <property type="entry name" value="AAA+_ATPase"/>
</dbReference>
<dbReference type="InterPro" id="IPR041445">
    <property type="entry name" value="AAA_lid_4"/>
</dbReference>
<dbReference type="InterPro" id="IPR004605">
    <property type="entry name" value="DNA_helicase_Holl-junc_RuvB"/>
</dbReference>
<dbReference type="InterPro" id="IPR027417">
    <property type="entry name" value="P-loop_NTPase"/>
</dbReference>
<dbReference type="InterPro" id="IPR008824">
    <property type="entry name" value="RuvB-like_N"/>
</dbReference>
<dbReference type="InterPro" id="IPR008823">
    <property type="entry name" value="RuvB_C"/>
</dbReference>
<dbReference type="InterPro" id="IPR036388">
    <property type="entry name" value="WH-like_DNA-bd_sf"/>
</dbReference>
<dbReference type="InterPro" id="IPR036390">
    <property type="entry name" value="WH_DNA-bd_sf"/>
</dbReference>
<dbReference type="NCBIfam" id="NF000868">
    <property type="entry name" value="PRK00080.1"/>
    <property type="match status" value="1"/>
</dbReference>
<dbReference type="NCBIfam" id="TIGR00635">
    <property type="entry name" value="ruvB"/>
    <property type="match status" value="1"/>
</dbReference>
<dbReference type="PANTHER" id="PTHR42848">
    <property type="match status" value="1"/>
</dbReference>
<dbReference type="PANTHER" id="PTHR42848:SF1">
    <property type="entry name" value="HOLLIDAY JUNCTION BRANCH MIGRATION COMPLEX SUBUNIT RUVB"/>
    <property type="match status" value="1"/>
</dbReference>
<dbReference type="Pfam" id="PF17864">
    <property type="entry name" value="AAA_lid_4"/>
    <property type="match status" value="1"/>
</dbReference>
<dbReference type="Pfam" id="PF05491">
    <property type="entry name" value="RuvB_C"/>
    <property type="match status" value="1"/>
</dbReference>
<dbReference type="Pfam" id="PF05496">
    <property type="entry name" value="RuvB_N"/>
    <property type="match status" value="1"/>
</dbReference>
<dbReference type="SMART" id="SM00382">
    <property type="entry name" value="AAA"/>
    <property type="match status" value="1"/>
</dbReference>
<dbReference type="SUPFAM" id="SSF52540">
    <property type="entry name" value="P-loop containing nucleoside triphosphate hydrolases"/>
    <property type="match status" value="1"/>
</dbReference>
<dbReference type="SUPFAM" id="SSF46785">
    <property type="entry name" value="Winged helix' DNA-binding domain"/>
    <property type="match status" value="1"/>
</dbReference>
<comment type="function">
    <text evidence="1">The RuvA-RuvB-RuvC complex processes Holliday junction (HJ) DNA during genetic recombination and DNA repair, while the RuvA-RuvB complex plays an important role in the rescue of blocked DNA replication forks via replication fork reversal (RFR). RuvA specifically binds to HJ cruciform DNA, conferring on it an open structure. The RuvB hexamer acts as an ATP-dependent pump, pulling dsDNA into and through the RuvAB complex. RuvB forms 2 homohexamers on either side of HJ DNA bound by 1 or 2 RuvA tetramers; 4 subunits per hexamer contact DNA at a time. Coordinated motions by a converter formed by DNA-disengaged RuvB subunits stimulates ATP hydrolysis and nucleotide exchange. Immobilization of the converter enables RuvB to convert the ATP-contained energy into a lever motion, pulling 2 nucleotides of DNA out of the RuvA tetramer per ATP hydrolyzed, thus driving DNA branch migration. The RuvB motors rotate together with the DNA substrate, which together with the progressing nucleotide cycle form the mechanistic basis for DNA recombination by continuous HJ branch migration. Branch migration allows RuvC to scan DNA until it finds its consensus sequence, where it cleaves and resolves cruciform DNA.</text>
</comment>
<comment type="catalytic activity">
    <reaction evidence="1">
        <text>ATP + H2O = ADP + phosphate + H(+)</text>
        <dbReference type="Rhea" id="RHEA:13065"/>
        <dbReference type="ChEBI" id="CHEBI:15377"/>
        <dbReference type="ChEBI" id="CHEBI:15378"/>
        <dbReference type="ChEBI" id="CHEBI:30616"/>
        <dbReference type="ChEBI" id="CHEBI:43474"/>
        <dbReference type="ChEBI" id="CHEBI:456216"/>
    </reaction>
</comment>
<comment type="subunit">
    <text evidence="1">Homohexamer. Forms an RuvA(8)-RuvB(12)-Holliday junction (HJ) complex. HJ DNA is sandwiched between 2 RuvA tetramers; dsDNA enters through RuvA and exits via RuvB. An RuvB hexamer assembles on each DNA strand where it exits the tetramer. Each RuvB hexamer is contacted by two RuvA subunits (via domain III) on 2 adjacent RuvB subunits; this complex drives branch migration. In the full resolvosome a probable DNA-RuvA(4)-RuvB(12)-RuvC(2) complex forms which resolves the HJ.</text>
</comment>
<comment type="subcellular location">
    <subcellularLocation>
        <location evidence="1">Cytoplasm</location>
    </subcellularLocation>
</comment>
<comment type="domain">
    <text evidence="1">Has 3 domains, the large (RuvB-L) and small ATPase (RuvB-S) domains and the C-terminal head (RuvB-H) domain. The head domain binds DNA, while the ATPase domains jointly bind ATP, ADP or are empty depending on the state of the subunit in the translocation cycle. During a single DNA translocation step the structure of each domain remains the same, but their relative positions change.</text>
</comment>
<comment type="similarity">
    <text evidence="1">Belongs to the RuvB family.</text>
</comment>
<reference key="1">
    <citation type="journal article" date="2005" name="Arch. Microbiol.">
        <title>The genome sequence of an anaerobic aromatic-degrading denitrifying bacterium, strain EbN1.</title>
        <authorList>
            <person name="Rabus R."/>
            <person name="Kube M."/>
            <person name="Heider J."/>
            <person name="Beck A."/>
            <person name="Heitmann K."/>
            <person name="Widdel F."/>
            <person name="Reinhardt R."/>
        </authorList>
    </citation>
    <scope>NUCLEOTIDE SEQUENCE [LARGE SCALE GENOMIC DNA]</scope>
    <source>
        <strain>DSM 19018 / LMG 30748 / EbN1</strain>
    </source>
</reference>
<accession>Q5P2U7</accession>
<protein>
    <recommendedName>
        <fullName evidence="1">Holliday junction branch migration complex subunit RuvB</fullName>
        <ecNumber evidence="1">3.6.4.-</ecNumber>
    </recommendedName>
</protein>
<feature type="chain" id="PRO_0000235348" description="Holliday junction branch migration complex subunit RuvB">
    <location>
        <begin position="1"/>
        <end position="353"/>
    </location>
</feature>
<feature type="region of interest" description="Large ATPase domain (RuvB-L)" evidence="1">
    <location>
        <begin position="4"/>
        <end position="190"/>
    </location>
</feature>
<feature type="region of interest" description="Small ATPAse domain (RuvB-S)" evidence="1">
    <location>
        <begin position="191"/>
        <end position="261"/>
    </location>
</feature>
<feature type="region of interest" description="Head domain (RuvB-H)" evidence="1">
    <location>
        <begin position="264"/>
        <end position="353"/>
    </location>
</feature>
<feature type="binding site" evidence="1">
    <location>
        <position position="29"/>
    </location>
    <ligand>
        <name>ATP</name>
        <dbReference type="ChEBI" id="CHEBI:30616"/>
    </ligand>
</feature>
<feature type="binding site" evidence="1">
    <location>
        <position position="30"/>
    </location>
    <ligand>
        <name>ATP</name>
        <dbReference type="ChEBI" id="CHEBI:30616"/>
    </ligand>
</feature>
<feature type="binding site" evidence="1">
    <location>
        <position position="71"/>
    </location>
    <ligand>
        <name>ATP</name>
        <dbReference type="ChEBI" id="CHEBI:30616"/>
    </ligand>
</feature>
<feature type="binding site" evidence="1">
    <location>
        <position position="74"/>
    </location>
    <ligand>
        <name>ATP</name>
        <dbReference type="ChEBI" id="CHEBI:30616"/>
    </ligand>
</feature>
<feature type="binding site" evidence="1">
    <location>
        <position position="75"/>
    </location>
    <ligand>
        <name>ATP</name>
        <dbReference type="ChEBI" id="CHEBI:30616"/>
    </ligand>
</feature>
<feature type="binding site" evidence="1">
    <location>
        <position position="75"/>
    </location>
    <ligand>
        <name>Mg(2+)</name>
        <dbReference type="ChEBI" id="CHEBI:18420"/>
    </ligand>
</feature>
<feature type="binding site" evidence="1">
    <location>
        <position position="76"/>
    </location>
    <ligand>
        <name>ATP</name>
        <dbReference type="ChEBI" id="CHEBI:30616"/>
    </ligand>
</feature>
<feature type="binding site" evidence="1">
    <location>
        <begin position="137"/>
        <end position="139"/>
    </location>
    <ligand>
        <name>ATP</name>
        <dbReference type="ChEBI" id="CHEBI:30616"/>
    </ligand>
</feature>
<feature type="binding site" evidence="1">
    <location>
        <position position="180"/>
    </location>
    <ligand>
        <name>ATP</name>
        <dbReference type="ChEBI" id="CHEBI:30616"/>
    </ligand>
</feature>
<feature type="binding site" evidence="1">
    <location>
        <position position="190"/>
    </location>
    <ligand>
        <name>ATP</name>
        <dbReference type="ChEBI" id="CHEBI:30616"/>
    </ligand>
</feature>
<feature type="binding site" evidence="1">
    <location>
        <position position="227"/>
    </location>
    <ligand>
        <name>ATP</name>
        <dbReference type="ChEBI" id="CHEBI:30616"/>
    </ligand>
</feature>
<feature type="binding site" evidence="1">
    <location>
        <position position="319"/>
    </location>
    <ligand>
        <name>DNA</name>
        <dbReference type="ChEBI" id="CHEBI:16991"/>
    </ligand>
</feature>
<feature type="binding site" evidence="1">
    <location>
        <position position="324"/>
    </location>
    <ligand>
        <name>DNA</name>
        <dbReference type="ChEBI" id="CHEBI:16991"/>
    </ligand>
</feature>
<name>RUVB_AROAE</name>
<gene>
    <name evidence="1" type="primary">ruvB</name>
    <name type="ordered locus">AZOSEA22420</name>
    <name type="ORF">ebA3958</name>
</gene>
<sequence length="353" mass="38562">MIETDKLQAPRVISAQTADRQEDVVERALRPKRLAEYVGQAKIREQLEIFIQAAKNRHEALDHVLLFGPPGLGKTTLAHIVAAEMGVNLRQTSGPVLERAGDLAALLTNLEPHDVLFIDEIHRLSPVVEEILYPALEDFQIDIMIGEGPAARSVKLDLPPFTLVGATTRAGMLTNPLRDRFGIVARLEFYTPHELAYIVGRSAGLLDVAIDDAGAVEIARRARGTPRIANRLLRRVRDYAQVKADGDITAPVADAALLMLDVDHLGLDLMDRKLLGAMLEKFGGGPVGLDNLAAAIGESSDTIEDVLEPYLIQQGYLQRTPRGRIASASIWQHFGLAFPRRAGDESAELFSAP</sequence>